<comment type="function">
    <text evidence="1">Produces ATP from ADP in the presence of a proton gradient across the membrane. The gamma chain is believed to be important in regulating ATPase activity and the flow of protons through the CF(0) complex.</text>
</comment>
<comment type="subunit">
    <text evidence="1">F-type ATPases have 2 components, CF(1) - the catalytic core - and CF(0) - the membrane proton channel. CF(1) has five subunits: alpha(3), beta(3), gamma(1), delta(1), epsilon(1). CF(0) has three main subunits: a, b and c.</text>
</comment>
<comment type="subcellular location">
    <subcellularLocation>
        <location evidence="1">Cell membrane</location>
        <topology evidence="1">Peripheral membrane protein</topology>
    </subcellularLocation>
</comment>
<comment type="similarity">
    <text evidence="1">Belongs to the ATPase gamma chain family.</text>
</comment>
<name>ATPG_CALS4</name>
<accession>Q8RC16</accession>
<protein>
    <recommendedName>
        <fullName evidence="1">ATP synthase gamma chain</fullName>
    </recommendedName>
    <alternativeName>
        <fullName evidence="1">ATP synthase F1 sector gamma subunit</fullName>
    </alternativeName>
    <alternativeName>
        <fullName evidence="1">F-ATPase gamma subunit</fullName>
    </alternativeName>
</protein>
<gene>
    <name evidence="1" type="primary">atpG</name>
    <name type="ordered locus">TTE0636</name>
</gene>
<reference key="1">
    <citation type="journal article" date="2002" name="Genome Res.">
        <title>A complete sequence of the T. tengcongensis genome.</title>
        <authorList>
            <person name="Bao Q."/>
            <person name="Tian Y."/>
            <person name="Li W."/>
            <person name="Xu Z."/>
            <person name="Xuan Z."/>
            <person name="Hu S."/>
            <person name="Dong W."/>
            <person name="Yang J."/>
            <person name="Chen Y."/>
            <person name="Xue Y."/>
            <person name="Xu Y."/>
            <person name="Lai X."/>
            <person name="Huang L."/>
            <person name="Dong X."/>
            <person name="Ma Y."/>
            <person name="Ling L."/>
            <person name="Tan H."/>
            <person name="Chen R."/>
            <person name="Wang J."/>
            <person name="Yu J."/>
            <person name="Yang H."/>
        </authorList>
    </citation>
    <scope>NUCLEOTIDE SEQUENCE [LARGE SCALE GENOMIC DNA]</scope>
    <source>
        <strain>DSM 15242 / JCM 11007 / NBRC 100824 / MB4</strain>
    </source>
</reference>
<dbReference type="EMBL" id="AE008691">
    <property type="protein sequence ID" value="AAM23904.1"/>
    <property type="molecule type" value="Genomic_DNA"/>
</dbReference>
<dbReference type="RefSeq" id="WP_011025046.1">
    <property type="nucleotide sequence ID" value="NC_003869.1"/>
</dbReference>
<dbReference type="SMR" id="Q8RC16"/>
<dbReference type="STRING" id="273068.TTE0636"/>
<dbReference type="KEGG" id="tte:TTE0636"/>
<dbReference type="eggNOG" id="COG0224">
    <property type="taxonomic scope" value="Bacteria"/>
</dbReference>
<dbReference type="HOGENOM" id="CLU_050669_0_1_9"/>
<dbReference type="OrthoDB" id="9812769at2"/>
<dbReference type="Proteomes" id="UP000000555">
    <property type="component" value="Chromosome"/>
</dbReference>
<dbReference type="GO" id="GO:0005886">
    <property type="term" value="C:plasma membrane"/>
    <property type="evidence" value="ECO:0007669"/>
    <property type="project" value="UniProtKB-SubCell"/>
</dbReference>
<dbReference type="GO" id="GO:0045259">
    <property type="term" value="C:proton-transporting ATP synthase complex"/>
    <property type="evidence" value="ECO:0007669"/>
    <property type="project" value="UniProtKB-KW"/>
</dbReference>
<dbReference type="GO" id="GO:0005524">
    <property type="term" value="F:ATP binding"/>
    <property type="evidence" value="ECO:0007669"/>
    <property type="project" value="UniProtKB-UniRule"/>
</dbReference>
<dbReference type="GO" id="GO:0046933">
    <property type="term" value="F:proton-transporting ATP synthase activity, rotational mechanism"/>
    <property type="evidence" value="ECO:0007669"/>
    <property type="project" value="UniProtKB-UniRule"/>
</dbReference>
<dbReference type="GO" id="GO:0042777">
    <property type="term" value="P:proton motive force-driven plasma membrane ATP synthesis"/>
    <property type="evidence" value="ECO:0007669"/>
    <property type="project" value="UniProtKB-UniRule"/>
</dbReference>
<dbReference type="CDD" id="cd12151">
    <property type="entry name" value="F1-ATPase_gamma"/>
    <property type="match status" value="1"/>
</dbReference>
<dbReference type="FunFam" id="1.10.287.80:FF:000001">
    <property type="entry name" value="ATP synthase gamma chain"/>
    <property type="match status" value="1"/>
</dbReference>
<dbReference type="Gene3D" id="3.40.1380.10">
    <property type="match status" value="1"/>
</dbReference>
<dbReference type="Gene3D" id="1.10.287.80">
    <property type="entry name" value="ATP synthase, gamma subunit, helix hairpin domain"/>
    <property type="match status" value="1"/>
</dbReference>
<dbReference type="HAMAP" id="MF_00815">
    <property type="entry name" value="ATP_synth_gamma_bact"/>
    <property type="match status" value="1"/>
</dbReference>
<dbReference type="InterPro" id="IPR035968">
    <property type="entry name" value="ATP_synth_F1_ATPase_gsu"/>
</dbReference>
<dbReference type="InterPro" id="IPR000131">
    <property type="entry name" value="ATP_synth_F1_gsu"/>
</dbReference>
<dbReference type="NCBIfam" id="TIGR01146">
    <property type="entry name" value="ATPsyn_F1gamma"/>
    <property type="match status" value="1"/>
</dbReference>
<dbReference type="PANTHER" id="PTHR11693">
    <property type="entry name" value="ATP SYNTHASE GAMMA CHAIN"/>
    <property type="match status" value="1"/>
</dbReference>
<dbReference type="PANTHER" id="PTHR11693:SF22">
    <property type="entry name" value="ATP SYNTHASE SUBUNIT GAMMA, MITOCHONDRIAL"/>
    <property type="match status" value="1"/>
</dbReference>
<dbReference type="Pfam" id="PF00231">
    <property type="entry name" value="ATP-synt"/>
    <property type="match status" value="1"/>
</dbReference>
<dbReference type="PRINTS" id="PR00126">
    <property type="entry name" value="ATPASEGAMMA"/>
</dbReference>
<dbReference type="SUPFAM" id="SSF52943">
    <property type="entry name" value="ATP synthase (F1-ATPase), gamma subunit"/>
    <property type="match status" value="1"/>
</dbReference>
<sequence length="295" mass="33589">MGKRDIALRIKSVKEVRKITRAMYLISASKFQKAKGMLDRVRPYYYRVQTVMKDILLHTGEVTSRYLEKKDVPEKQDKRKVFLIVTGDKGLCGAYNHNVIKASIELIKNEKANLKVVGEVGRRYFIKKGYDVDRDFLYTAQNPTVDLAAEIAEILLKEYNNGDADEIWAVYTEMKGLSQKVRTLRLLPLDVENFMSIAAEEEEAVEEHVVIDSDMIYEPSPSEVFDAIVPEYLKGLIYSILVQAFASEHFSRMVAMDGATSNADEMIEKLTLLYNKLRQASITQEIIEIITGASV</sequence>
<proteinExistence type="inferred from homology"/>
<keyword id="KW-0066">ATP synthesis</keyword>
<keyword id="KW-1003">Cell membrane</keyword>
<keyword id="KW-0139">CF(1)</keyword>
<keyword id="KW-0375">Hydrogen ion transport</keyword>
<keyword id="KW-0406">Ion transport</keyword>
<keyword id="KW-0472">Membrane</keyword>
<keyword id="KW-1185">Reference proteome</keyword>
<keyword id="KW-0813">Transport</keyword>
<organism>
    <name type="scientific">Caldanaerobacter subterraneus subsp. tengcongensis (strain DSM 15242 / JCM 11007 / NBRC 100824 / MB4)</name>
    <name type="common">Thermoanaerobacter tengcongensis</name>
    <dbReference type="NCBI Taxonomy" id="273068"/>
    <lineage>
        <taxon>Bacteria</taxon>
        <taxon>Bacillati</taxon>
        <taxon>Bacillota</taxon>
        <taxon>Clostridia</taxon>
        <taxon>Thermoanaerobacterales</taxon>
        <taxon>Thermoanaerobacteraceae</taxon>
        <taxon>Caldanaerobacter</taxon>
    </lineage>
</organism>
<feature type="chain" id="PRO_0000073407" description="ATP synthase gamma chain">
    <location>
        <begin position="1"/>
        <end position="295"/>
    </location>
</feature>
<evidence type="ECO:0000255" key="1">
    <source>
        <dbReference type="HAMAP-Rule" id="MF_00815"/>
    </source>
</evidence>